<protein>
    <recommendedName>
        <fullName evidence="1">Large ribosomal subunit protein bL21</fullName>
    </recommendedName>
    <alternativeName>
        <fullName evidence="2">50S ribosomal protein L21</fullName>
    </alternativeName>
</protein>
<name>RL21_STRPI</name>
<proteinExistence type="inferred from homology"/>
<accession>B1IBP2</accession>
<gene>
    <name evidence="1" type="primary">rplU</name>
    <name type="ordered locus">SPH_1197</name>
</gene>
<comment type="function">
    <text evidence="1">This protein binds to 23S rRNA in the presence of protein L20.</text>
</comment>
<comment type="subunit">
    <text evidence="1">Part of the 50S ribosomal subunit. Contacts protein L20.</text>
</comment>
<comment type="similarity">
    <text evidence="1">Belongs to the bacterial ribosomal protein bL21 family.</text>
</comment>
<keyword id="KW-0687">Ribonucleoprotein</keyword>
<keyword id="KW-0689">Ribosomal protein</keyword>
<keyword id="KW-0694">RNA-binding</keyword>
<keyword id="KW-0699">rRNA-binding</keyword>
<sequence>MSTYAIIKTGGKQVKVEVGQAVYVEKLNVEAGQEVTFNEVVLVGGENTVVGTPLVAGATVVGTVEKQGKQKKVVTYKYKPKKGSHRKQGHRQPYTKVVINAINA</sequence>
<reference key="1">
    <citation type="journal article" date="2010" name="Genome Biol.">
        <title>Structure and dynamics of the pan-genome of Streptococcus pneumoniae and closely related species.</title>
        <authorList>
            <person name="Donati C."/>
            <person name="Hiller N.L."/>
            <person name="Tettelin H."/>
            <person name="Muzzi A."/>
            <person name="Croucher N.J."/>
            <person name="Angiuoli S.V."/>
            <person name="Oggioni M."/>
            <person name="Dunning Hotopp J.C."/>
            <person name="Hu F.Z."/>
            <person name="Riley D.R."/>
            <person name="Covacci A."/>
            <person name="Mitchell T.J."/>
            <person name="Bentley S.D."/>
            <person name="Kilian M."/>
            <person name="Ehrlich G.D."/>
            <person name="Rappuoli R."/>
            <person name="Moxon E.R."/>
            <person name="Masignani V."/>
        </authorList>
    </citation>
    <scope>NUCLEOTIDE SEQUENCE [LARGE SCALE GENOMIC DNA]</scope>
    <source>
        <strain>Hungary19A-6</strain>
    </source>
</reference>
<organism>
    <name type="scientific">Streptococcus pneumoniae (strain Hungary19A-6)</name>
    <dbReference type="NCBI Taxonomy" id="487214"/>
    <lineage>
        <taxon>Bacteria</taxon>
        <taxon>Bacillati</taxon>
        <taxon>Bacillota</taxon>
        <taxon>Bacilli</taxon>
        <taxon>Lactobacillales</taxon>
        <taxon>Streptococcaceae</taxon>
        <taxon>Streptococcus</taxon>
    </lineage>
</organism>
<feature type="chain" id="PRO_1000143857" description="Large ribosomal subunit protein bL21">
    <location>
        <begin position="1"/>
        <end position="104"/>
    </location>
</feature>
<evidence type="ECO:0000255" key="1">
    <source>
        <dbReference type="HAMAP-Rule" id="MF_01363"/>
    </source>
</evidence>
<evidence type="ECO:0000305" key="2"/>
<dbReference type="EMBL" id="CP000936">
    <property type="protein sequence ID" value="ACA36328.1"/>
    <property type="molecule type" value="Genomic_DNA"/>
</dbReference>
<dbReference type="RefSeq" id="WP_000109141.1">
    <property type="nucleotide sequence ID" value="NC_010380.1"/>
</dbReference>
<dbReference type="SMR" id="B1IBP2"/>
<dbReference type="GeneID" id="93739805"/>
<dbReference type="KEGG" id="spv:SPH_1197"/>
<dbReference type="HOGENOM" id="CLU_061463_3_1_9"/>
<dbReference type="Proteomes" id="UP000002163">
    <property type="component" value="Chromosome"/>
</dbReference>
<dbReference type="GO" id="GO:0005737">
    <property type="term" value="C:cytoplasm"/>
    <property type="evidence" value="ECO:0007669"/>
    <property type="project" value="UniProtKB-ARBA"/>
</dbReference>
<dbReference type="GO" id="GO:1990904">
    <property type="term" value="C:ribonucleoprotein complex"/>
    <property type="evidence" value="ECO:0007669"/>
    <property type="project" value="UniProtKB-KW"/>
</dbReference>
<dbReference type="GO" id="GO:0005840">
    <property type="term" value="C:ribosome"/>
    <property type="evidence" value="ECO:0007669"/>
    <property type="project" value="UniProtKB-KW"/>
</dbReference>
<dbReference type="GO" id="GO:0019843">
    <property type="term" value="F:rRNA binding"/>
    <property type="evidence" value="ECO:0007669"/>
    <property type="project" value="UniProtKB-UniRule"/>
</dbReference>
<dbReference type="GO" id="GO:0003735">
    <property type="term" value="F:structural constituent of ribosome"/>
    <property type="evidence" value="ECO:0007669"/>
    <property type="project" value="InterPro"/>
</dbReference>
<dbReference type="GO" id="GO:0006412">
    <property type="term" value="P:translation"/>
    <property type="evidence" value="ECO:0007669"/>
    <property type="project" value="UniProtKB-UniRule"/>
</dbReference>
<dbReference type="HAMAP" id="MF_01363">
    <property type="entry name" value="Ribosomal_bL21"/>
    <property type="match status" value="1"/>
</dbReference>
<dbReference type="InterPro" id="IPR028909">
    <property type="entry name" value="bL21-like"/>
</dbReference>
<dbReference type="InterPro" id="IPR036164">
    <property type="entry name" value="bL21-like_sf"/>
</dbReference>
<dbReference type="InterPro" id="IPR001787">
    <property type="entry name" value="Ribosomal_bL21"/>
</dbReference>
<dbReference type="InterPro" id="IPR018258">
    <property type="entry name" value="Ribosomal_bL21_CS"/>
</dbReference>
<dbReference type="NCBIfam" id="TIGR00061">
    <property type="entry name" value="L21"/>
    <property type="match status" value="1"/>
</dbReference>
<dbReference type="PANTHER" id="PTHR21349">
    <property type="entry name" value="50S RIBOSOMAL PROTEIN L21"/>
    <property type="match status" value="1"/>
</dbReference>
<dbReference type="PANTHER" id="PTHR21349:SF0">
    <property type="entry name" value="LARGE RIBOSOMAL SUBUNIT PROTEIN BL21M"/>
    <property type="match status" value="1"/>
</dbReference>
<dbReference type="Pfam" id="PF00829">
    <property type="entry name" value="Ribosomal_L21p"/>
    <property type="match status" value="1"/>
</dbReference>
<dbReference type="SUPFAM" id="SSF141091">
    <property type="entry name" value="L21p-like"/>
    <property type="match status" value="1"/>
</dbReference>
<dbReference type="PROSITE" id="PS01169">
    <property type="entry name" value="RIBOSOMAL_L21"/>
    <property type="match status" value="1"/>
</dbReference>